<sequence length="28" mass="3146">MTHIVRFIGLLLLNASSLRGRRVSGIQH</sequence>
<proteinExistence type="inferred from homology"/>
<keyword id="KW-0028">Amino-acid biosynthesis</keyword>
<keyword id="KW-0100">Branched-chain amino acid biosynthesis</keyword>
<keyword id="KW-0428">Leader peptide</keyword>
<keyword id="KW-0432">Leucine biosynthesis</keyword>
<keyword id="KW-1185">Reference proteome</keyword>
<gene>
    <name type="primary">leuL</name>
    <name type="ordered locus">c5492</name>
</gene>
<dbReference type="EMBL" id="AE014075">
    <property type="protein sequence ID" value="AAN78588.1"/>
    <property type="molecule type" value="Genomic_DNA"/>
</dbReference>
<dbReference type="RefSeq" id="WP_001300467.1">
    <property type="nucleotide sequence ID" value="NZ_CP051263.1"/>
</dbReference>
<dbReference type="STRING" id="199310.c5492"/>
<dbReference type="GeneID" id="93777360"/>
<dbReference type="KEGG" id="ecc:c5492"/>
<dbReference type="HOGENOM" id="CLU_221572_0_0_6"/>
<dbReference type="BioCyc" id="ECOL199310:C5492-MONOMER"/>
<dbReference type="Proteomes" id="UP000001410">
    <property type="component" value="Chromosome"/>
</dbReference>
<dbReference type="GO" id="GO:0009098">
    <property type="term" value="P:L-leucine biosynthetic process"/>
    <property type="evidence" value="ECO:0007669"/>
    <property type="project" value="UniProtKB-KW"/>
</dbReference>
<dbReference type="InterPro" id="IPR012570">
    <property type="entry name" value="Leu_leader"/>
</dbReference>
<dbReference type="NCBIfam" id="NF007397">
    <property type="entry name" value="PRK09925.1"/>
    <property type="match status" value="1"/>
</dbReference>
<dbReference type="Pfam" id="PF08054">
    <property type="entry name" value="Leu_leader"/>
    <property type="match status" value="1"/>
</dbReference>
<protein>
    <recommendedName>
        <fullName>leu operon leader peptide</fullName>
    </recommendedName>
    <alternativeName>
        <fullName>leu operon attenuator peptide</fullName>
    </alternativeName>
</protein>
<organism>
    <name type="scientific">Escherichia coli O6:H1 (strain CFT073 / ATCC 700928 / UPEC)</name>
    <dbReference type="NCBI Taxonomy" id="199310"/>
    <lineage>
        <taxon>Bacteria</taxon>
        <taxon>Pseudomonadati</taxon>
        <taxon>Pseudomonadota</taxon>
        <taxon>Gammaproteobacteria</taxon>
        <taxon>Enterobacterales</taxon>
        <taxon>Enterobacteriaceae</taxon>
        <taxon>Escherichia</taxon>
    </lineage>
</organism>
<name>LPL_ECOL6</name>
<evidence type="ECO:0000250" key="1"/>
<accession>P0AD80</accession>
<accession>P09149</accession>
<accession>Q8VSS2</accession>
<accession>Q8VSS3</accession>
<feature type="peptide" id="PRO_0000043997" description="leu operon leader peptide">
    <location>
        <begin position="1"/>
        <end position="28"/>
    </location>
</feature>
<comment type="function">
    <text evidence="1">Involved in control of the biosynthesis of leucine.</text>
</comment>
<reference key="1">
    <citation type="journal article" date="2002" name="Proc. Natl. Acad. Sci. U.S.A.">
        <title>Extensive mosaic structure revealed by the complete genome sequence of uropathogenic Escherichia coli.</title>
        <authorList>
            <person name="Welch R.A."/>
            <person name="Burland V."/>
            <person name="Plunkett G. III"/>
            <person name="Redford P."/>
            <person name="Roesch P."/>
            <person name="Rasko D."/>
            <person name="Buckles E.L."/>
            <person name="Liou S.-R."/>
            <person name="Boutin A."/>
            <person name="Hackett J."/>
            <person name="Stroud D."/>
            <person name="Mayhew G.F."/>
            <person name="Rose D.J."/>
            <person name="Zhou S."/>
            <person name="Schwartz D.C."/>
            <person name="Perna N.T."/>
            <person name="Mobley H.L.T."/>
            <person name="Donnenberg M.S."/>
            <person name="Blattner F.R."/>
        </authorList>
    </citation>
    <scope>NUCLEOTIDE SEQUENCE [LARGE SCALE GENOMIC DNA]</scope>
    <source>
        <strain>CFT073 / ATCC 700928 / UPEC</strain>
    </source>
</reference>